<gene>
    <name evidence="1" type="primary">aroQ</name>
    <name type="ordered locus">CHY_1874</name>
</gene>
<protein>
    <recommendedName>
        <fullName evidence="1">3-dehydroquinate dehydratase</fullName>
        <shortName evidence="1">3-dehydroquinase</shortName>
        <ecNumber evidence="1">4.2.1.10</ecNumber>
    </recommendedName>
    <alternativeName>
        <fullName evidence="1">Type II DHQase</fullName>
    </alternativeName>
</protein>
<feature type="chain" id="PRO_1000023460" description="3-dehydroquinate dehydratase">
    <location>
        <begin position="1"/>
        <end position="154"/>
    </location>
</feature>
<feature type="active site" description="Proton acceptor" evidence="1">
    <location>
        <position position="22"/>
    </location>
</feature>
<feature type="active site" description="Proton donor" evidence="1">
    <location>
        <position position="99"/>
    </location>
</feature>
<feature type="binding site" evidence="1">
    <location>
        <position position="73"/>
    </location>
    <ligand>
        <name>substrate</name>
    </ligand>
</feature>
<feature type="binding site" evidence="1">
    <location>
        <position position="79"/>
    </location>
    <ligand>
        <name>substrate</name>
    </ligand>
</feature>
<feature type="binding site" evidence="1">
    <location>
        <position position="86"/>
    </location>
    <ligand>
        <name>substrate</name>
    </ligand>
</feature>
<feature type="binding site" evidence="1">
    <location>
        <begin position="100"/>
        <end position="101"/>
    </location>
    <ligand>
        <name>substrate</name>
    </ligand>
</feature>
<feature type="binding site" evidence="1">
    <location>
        <position position="110"/>
    </location>
    <ligand>
        <name>substrate</name>
    </ligand>
</feature>
<feature type="site" description="Transition state stabilizer" evidence="1">
    <location>
        <position position="17"/>
    </location>
</feature>
<accession>Q3AAZ0</accession>
<proteinExistence type="inferred from homology"/>
<dbReference type="EC" id="4.2.1.10" evidence="1"/>
<dbReference type="EMBL" id="CP000141">
    <property type="protein sequence ID" value="ABB13736.1"/>
    <property type="molecule type" value="Genomic_DNA"/>
</dbReference>
<dbReference type="RefSeq" id="WP_011344768.1">
    <property type="nucleotide sequence ID" value="NC_007503.1"/>
</dbReference>
<dbReference type="SMR" id="Q3AAZ0"/>
<dbReference type="FunCoup" id="Q3AAZ0">
    <property type="interactions" value="201"/>
</dbReference>
<dbReference type="STRING" id="246194.CHY_1874"/>
<dbReference type="KEGG" id="chy:CHY_1874"/>
<dbReference type="eggNOG" id="COG0757">
    <property type="taxonomic scope" value="Bacteria"/>
</dbReference>
<dbReference type="HOGENOM" id="CLU_090968_2_0_9"/>
<dbReference type="InParanoid" id="Q3AAZ0"/>
<dbReference type="OrthoDB" id="9790793at2"/>
<dbReference type="UniPathway" id="UPA00053">
    <property type="reaction ID" value="UER00086"/>
</dbReference>
<dbReference type="Proteomes" id="UP000002706">
    <property type="component" value="Chromosome"/>
</dbReference>
<dbReference type="GO" id="GO:0003855">
    <property type="term" value="F:3-dehydroquinate dehydratase activity"/>
    <property type="evidence" value="ECO:0007669"/>
    <property type="project" value="UniProtKB-UniRule"/>
</dbReference>
<dbReference type="GO" id="GO:0008652">
    <property type="term" value="P:amino acid biosynthetic process"/>
    <property type="evidence" value="ECO:0007669"/>
    <property type="project" value="UniProtKB-KW"/>
</dbReference>
<dbReference type="GO" id="GO:0009073">
    <property type="term" value="P:aromatic amino acid family biosynthetic process"/>
    <property type="evidence" value="ECO:0007669"/>
    <property type="project" value="UniProtKB-KW"/>
</dbReference>
<dbReference type="GO" id="GO:0009423">
    <property type="term" value="P:chorismate biosynthetic process"/>
    <property type="evidence" value="ECO:0007669"/>
    <property type="project" value="UniProtKB-UniRule"/>
</dbReference>
<dbReference type="GO" id="GO:0019631">
    <property type="term" value="P:quinate catabolic process"/>
    <property type="evidence" value="ECO:0007669"/>
    <property type="project" value="TreeGrafter"/>
</dbReference>
<dbReference type="CDD" id="cd00466">
    <property type="entry name" value="DHQase_II"/>
    <property type="match status" value="1"/>
</dbReference>
<dbReference type="Gene3D" id="3.40.50.9100">
    <property type="entry name" value="Dehydroquinase, class II"/>
    <property type="match status" value="1"/>
</dbReference>
<dbReference type="HAMAP" id="MF_00169">
    <property type="entry name" value="AroQ"/>
    <property type="match status" value="1"/>
</dbReference>
<dbReference type="InterPro" id="IPR001874">
    <property type="entry name" value="DHquinase_II"/>
</dbReference>
<dbReference type="InterPro" id="IPR018509">
    <property type="entry name" value="DHquinase_II_CS"/>
</dbReference>
<dbReference type="InterPro" id="IPR036441">
    <property type="entry name" value="DHquinase_II_sf"/>
</dbReference>
<dbReference type="NCBIfam" id="TIGR01088">
    <property type="entry name" value="aroQ"/>
    <property type="match status" value="1"/>
</dbReference>
<dbReference type="NCBIfam" id="NF003805">
    <property type="entry name" value="PRK05395.1-2"/>
    <property type="match status" value="1"/>
</dbReference>
<dbReference type="NCBIfam" id="NF003806">
    <property type="entry name" value="PRK05395.1-3"/>
    <property type="match status" value="1"/>
</dbReference>
<dbReference type="NCBIfam" id="NF003807">
    <property type="entry name" value="PRK05395.1-4"/>
    <property type="match status" value="1"/>
</dbReference>
<dbReference type="PANTHER" id="PTHR21272">
    <property type="entry name" value="CATABOLIC 3-DEHYDROQUINASE"/>
    <property type="match status" value="1"/>
</dbReference>
<dbReference type="PANTHER" id="PTHR21272:SF3">
    <property type="entry name" value="CATABOLIC 3-DEHYDROQUINASE"/>
    <property type="match status" value="1"/>
</dbReference>
<dbReference type="Pfam" id="PF01220">
    <property type="entry name" value="DHquinase_II"/>
    <property type="match status" value="1"/>
</dbReference>
<dbReference type="PIRSF" id="PIRSF001399">
    <property type="entry name" value="DHquinase_II"/>
    <property type="match status" value="1"/>
</dbReference>
<dbReference type="SUPFAM" id="SSF52304">
    <property type="entry name" value="Type II 3-dehydroquinate dehydratase"/>
    <property type="match status" value="1"/>
</dbReference>
<dbReference type="PROSITE" id="PS01029">
    <property type="entry name" value="DEHYDROQUINASE_II"/>
    <property type="match status" value="1"/>
</dbReference>
<name>AROQ_CARHZ</name>
<keyword id="KW-0028">Amino-acid biosynthesis</keyword>
<keyword id="KW-0057">Aromatic amino acid biosynthesis</keyword>
<keyword id="KW-0456">Lyase</keyword>
<keyword id="KW-1185">Reference proteome</keyword>
<comment type="function">
    <text evidence="1">Catalyzes a trans-dehydration via an enolate intermediate.</text>
</comment>
<comment type="catalytic activity">
    <reaction evidence="1">
        <text>3-dehydroquinate = 3-dehydroshikimate + H2O</text>
        <dbReference type="Rhea" id="RHEA:21096"/>
        <dbReference type="ChEBI" id="CHEBI:15377"/>
        <dbReference type="ChEBI" id="CHEBI:16630"/>
        <dbReference type="ChEBI" id="CHEBI:32364"/>
        <dbReference type="EC" id="4.2.1.10"/>
    </reaction>
</comment>
<comment type="pathway">
    <text evidence="1">Metabolic intermediate biosynthesis; chorismate biosynthesis; chorismate from D-erythrose 4-phosphate and phosphoenolpyruvate: step 3/7.</text>
</comment>
<comment type="subunit">
    <text evidence="1">Homododecamer.</text>
</comment>
<comment type="similarity">
    <text evidence="1">Belongs to the type-II 3-dehydroquinase family.</text>
</comment>
<organism>
    <name type="scientific">Carboxydothermus hydrogenoformans (strain ATCC BAA-161 / DSM 6008 / Z-2901)</name>
    <dbReference type="NCBI Taxonomy" id="246194"/>
    <lineage>
        <taxon>Bacteria</taxon>
        <taxon>Bacillati</taxon>
        <taxon>Bacillota</taxon>
        <taxon>Clostridia</taxon>
        <taxon>Thermoanaerobacterales</taxon>
        <taxon>Thermoanaerobacteraceae</taxon>
        <taxon>Carboxydothermus</taxon>
    </lineage>
</organism>
<sequence>MKILVLNGPNLNLLGIREPEIYGKVSLEEIEKDLTGFAENQGVEIIFYQKNGEGELIDLIHRYYREIDGILINPGAYTHYSIALRDALLAVGKPAVEVHLSNLYKREEFRQHSVTAGACIGYIAGFGVDSYRLGLIALIDYLKRRDNDGASGKA</sequence>
<evidence type="ECO:0000255" key="1">
    <source>
        <dbReference type="HAMAP-Rule" id="MF_00169"/>
    </source>
</evidence>
<reference key="1">
    <citation type="journal article" date="2005" name="PLoS Genet.">
        <title>Life in hot carbon monoxide: the complete genome sequence of Carboxydothermus hydrogenoformans Z-2901.</title>
        <authorList>
            <person name="Wu M."/>
            <person name="Ren Q."/>
            <person name="Durkin A.S."/>
            <person name="Daugherty S.C."/>
            <person name="Brinkac L.M."/>
            <person name="Dodson R.J."/>
            <person name="Madupu R."/>
            <person name="Sullivan S.A."/>
            <person name="Kolonay J.F."/>
            <person name="Nelson W.C."/>
            <person name="Tallon L.J."/>
            <person name="Jones K.M."/>
            <person name="Ulrich L.E."/>
            <person name="Gonzalez J.M."/>
            <person name="Zhulin I.B."/>
            <person name="Robb F.T."/>
            <person name="Eisen J.A."/>
        </authorList>
    </citation>
    <scope>NUCLEOTIDE SEQUENCE [LARGE SCALE GENOMIC DNA]</scope>
    <source>
        <strain>ATCC BAA-161 / DSM 6008 / Z-2901</strain>
    </source>
</reference>